<dbReference type="EC" id="4.3.2.10" evidence="1"/>
<dbReference type="EMBL" id="CP000681">
    <property type="protein sequence ID" value="ABP75905.1"/>
    <property type="molecule type" value="Genomic_DNA"/>
</dbReference>
<dbReference type="SMR" id="A4Y7H2"/>
<dbReference type="STRING" id="319224.Sputcn32_2184"/>
<dbReference type="KEGG" id="spc:Sputcn32_2184"/>
<dbReference type="eggNOG" id="COG0107">
    <property type="taxonomic scope" value="Bacteria"/>
</dbReference>
<dbReference type="HOGENOM" id="CLU_048577_4_0_6"/>
<dbReference type="UniPathway" id="UPA00031">
    <property type="reaction ID" value="UER00010"/>
</dbReference>
<dbReference type="GO" id="GO:0005737">
    <property type="term" value="C:cytoplasm"/>
    <property type="evidence" value="ECO:0007669"/>
    <property type="project" value="UniProtKB-SubCell"/>
</dbReference>
<dbReference type="GO" id="GO:0000107">
    <property type="term" value="F:imidazoleglycerol-phosphate synthase activity"/>
    <property type="evidence" value="ECO:0007669"/>
    <property type="project" value="UniProtKB-UniRule"/>
</dbReference>
<dbReference type="GO" id="GO:0016829">
    <property type="term" value="F:lyase activity"/>
    <property type="evidence" value="ECO:0007669"/>
    <property type="project" value="UniProtKB-KW"/>
</dbReference>
<dbReference type="GO" id="GO:0000105">
    <property type="term" value="P:L-histidine biosynthetic process"/>
    <property type="evidence" value="ECO:0007669"/>
    <property type="project" value="UniProtKB-UniRule"/>
</dbReference>
<dbReference type="CDD" id="cd04731">
    <property type="entry name" value="HisF"/>
    <property type="match status" value="1"/>
</dbReference>
<dbReference type="FunFam" id="3.20.20.70:FF:000006">
    <property type="entry name" value="Imidazole glycerol phosphate synthase subunit HisF"/>
    <property type="match status" value="1"/>
</dbReference>
<dbReference type="Gene3D" id="3.20.20.70">
    <property type="entry name" value="Aldolase class I"/>
    <property type="match status" value="1"/>
</dbReference>
<dbReference type="HAMAP" id="MF_01013">
    <property type="entry name" value="HisF"/>
    <property type="match status" value="1"/>
</dbReference>
<dbReference type="InterPro" id="IPR013785">
    <property type="entry name" value="Aldolase_TIM"/>
</dbReference>
<dbReference type="InterPro" id="IPR006062">
    <property type="entry name" value="His_biosynth"/>
</dbReference>
<dbReference type="InterPro" id="IPR004651">
    <property type="entry name" value="HisF"/>
</dbReference>
<dbReference type="InterPro" id="IPR050064">
    <property type="entry name" value="IGPS_HisA/HisF"/>
</dbReference>
<dbReference type="InterPro" id="IPR011060">
    <property type="entry name" value="RibuloseP-bd_barrel"/>
</dbReference>
<dbReference type="NCBIfam" id="TIGR00735">
    <property type="entry name" value="hisF"/>
    <property type="match status" value="1"/>
</dbReference>
<dbReference type="PANTHER" id="PTHR21235:SF2">
    <property type="entry name" value="IMIDAZOLE GLYCEROL PHOSPHATE SYNTHASE HISHF"/>
    <property type="match status" value="1"/>
</dbReference>
<dbReference type="PANTHER" id="PTHR21235">
    <property type="entry name" value="IMIDAZOLE GLYCEROL PHOSPHATE SYNTHASE SUBUNIT HISF/H IGP SYNTHASE SUBUNIT HISF/H"/>
    <property type="match status" value="1"/>
</dbReference>
<dbReference type="Pfam" id="PF00977">
    <property type="entry name" value="His_biosynth"/>
    <property type="match status" value="1"/>
</dbReference>
<dbReference type="SUPFAM" id="SSF51366">
    <property type="entry name" value="Ribulose-phoshate binding barrel"/>
    <property type="match status" value="1"/>
</dbReference>
<comment type="function">
    <text evidence="1">IGPS catalyzes the conversion of PRFAR and glutamine to IGP, AICAR and glutamate. The HisF subunit catalyzes the cyclization activity that produces IGP and AICAR from PRFAR using the ammonia provided by the HisH subunit.</text>
</comment>
<comment type="catalytic activity">
    <reaction evidence="1">
        <text>5-[(5-phospho-1-deoxy-D-ribulos-1-ylimino)methylamino]-1-(5-phospho-beta-D-ribosyl)imidazole-4-carboxamide + L-glutamine = D-erythro-1-(imidazol-4-yl)glycerol 3-phosphate + 5-amino-1-(5-phospho-beta-D-ribosyl)imidazole-4-carboxamide + L-glutamate + H(+)</text>
        <dbReference type="Rhea" id="RHEA:24793"/>
        <dbReference type="ChEBI" id="CHEBI:15378"/>
        <dbReference type="ChEBI" id="CHEBI:29985"/>
        <dbReference type="ChEBI" id="CHEBI:58278"/>
        <dbReference type="ChEBI" id="CHEBI:58359"/>
        <dbReference type="ChEBI" id="CHEBI:58475"/>
        <dbReference type="ChEBI" id="CHEBI:58525"/>
        <dbReference type="EC" id="4.3.2.10"/>
    </reaction>
</comment>
<comment type="pathway">
    <text evidence="1">Amino-acid biosynthesis; L-histidine biosynthesis; L-histidine from 5-phospho-alpha-D-ribose 1-diphosphate: step 5/9.</text>
</comment>
<comment type="subunit">
    <text evidence="1">Heterodimer of HisH and HisF.</text>
</comment>
<comment type="subcellular location">
    <subcellularLocation>
        <location evidence="1">Cytoplasm</location>
    </subcellularLocation>
</comment>
<comment type="similarity">
    <text evidence="1">Belongs to the HisA/HisF family.</text>
</comment>
<protein>
    <recommendedName>
        <fullName evidence="1">Imidazole glycerol phosphate synthase subunit HisF</fullName>
        <ecNumber evidence="1">4.3.2.10</ecNumber>
    </recommendedName>
    <alternativeName>
        <fullName evidence="1">IGP synthase cyclase subunit</fullName>
    </alternativeName>
    <alternativeName>
        <fullName evidence="1">IGP synthase subunit HisF</fullName>
    </alternativeName>
    <alternativeName>
        <fullName evidence="1">ImGP synthase subunit HisF</fullName>
        <shortName evidence="1">IGPS subunit HisF</shortName>
    </alternativeName>
</protein>
<evidence type="ECO:0000255" key="1">
    <source>
        <dbReference type="HAMAP-Rule" id="MF_01013"/>
    </source>
</evidence>
<proteinExistence type="inferred from homology"/>
<reference key="1">
    <citation type="submission" date="2007-04" db="EMBL/GenBank/DDBJ databases">
        <title>Complete sequence of Shewanella putrefaciens CN-32.</title>
        <authorList>
            <consortium name="US DOE Joint Genome Institute"/>
            <person name="Copeland A."/>
            <person name="Lucas S."/>
            <person name="Lapidus A."/>
            <person name="Barry K."/>
            <person name="Detter J.C."/>
            <person name="Glavina del Rio T."/>
            <person name="Hammon N."/>
            <person name="Israni S."/>
            <person name="Dalin E."/>
            <person name="Tice H."/>
            <person name="Pitluck S."/>
            <person name="Chain P."/>
            <person name="Malfatti S."/>
            <person name="Shin M."/>
            <person name="Vergez L."/>
            <person name="Schmutz J."/>
            <person name="Larimer F."/>
            <person name="Land M."/>
            <person name="Hauser L."/>
            <person name="Kyrpides N."/>
            <person name="Mikhailova N."/>
            <person name="Romine M.F."/>
            <person name="Fredrickson J."/>
            <person name="Tiedje J."/>
            <person name="Richardson P."/>
        </authorList>
    </citation>
    <scope>NUCLEOTIDE SEQUENCE [LARGE SCALE GENOMIC DNA]</scope>
    <source>
        <strain>CN-32 / ATCC BAA-453</strain>
    </source>
</reference>
<accession>A4Y7H2</accession>
<keyword id="KW-0028">Amino-acid biosynthesis</keyword>
<keyword id="KW-0963">Cytoplasm</keyword>
<keyword id="KW-0368">Histidine biosynthesis</keyword>
<keyword id="KW-0456">Lyase</keyword>
<feature type="chain" id="PRO_1000063147" description="Imidazole glycerol phosphate synthase subunit HisF">
    <location>
        <begin position="1"/>
        <end position="257"/>
    </location>
</feature>
<feature type="active site" evidence="1">
    <location>
        <position position="11"/>
    </location>
</feature>
<feature type="active site" evidence="1">
    <location>
        <position position="130"/>
    </location>
</feature>
<gene>
    <name evidence="1" type="primary">hisF</name>
    <name type="ordered locus">Sputcn32_2184</name>
</gene>
<organism>
    <name type="scientific">Shewanella putrefaciens (strain CN-32 / ATCC BAA-453)</name>
    <dbReference type="NCBI Taxonomy" id="319224"/>
    <lineage>
        <taxon>Bacteria</taxon>
        <taxon>Pseudomonadati</taxon>
        <taxon>Pseudomonadota</taxon>
        <taxon>Gammaproteobacteria</taxon>
        <taxon>Alteromonadales</taxon>
        <taxon>Shewanellaceae</taxon>
        <taxon>Shewanella</taxon>
    </lineage>
</organism>
<sequence>MLAKRLVPCLDVKDGKVVKGVQFRNHEIVGDIVPLAARYAEEGADELVFYDITASAHERVVDKSWVSRVAEQIDIPFCVAGGIKTISQARELLAFGADKISINSPALTDPSLISRLQDEFGRQCIVIGIDSFFDASSNSYKVKQFTGDEAATKDTQWFTQDWVEEVQKRGCGEIVLNVMNQDGVRGGYDIKQLSLVRAICDVPLIASGGAGAMAHFRDVFIEAKVDAALAASVFHKAIINIGELKAYLAAEGIAIRR</sequence>
<name>HIS6_SHEPC</name>